<name>DIR11_ARATH</name>
<evidence type="ECO:0000250" key="1"/>
<evidence type="ECO:0000255" key="2"/>
<evidence type="ECO:0000305" key="3"/>
<comment type="function">
    <text evidence="1">Dirigent proteins impart stereoselectivity on the phenoxy radical-coupling reaction, yielding optically active lignans from two molecules of coniferyl alcohol in the biosynthesis of lignans, flavonolignans, and alkaloids and thus plays a central role in plant secondary metabolism.</text>
</comment>
<comment type="subunit">
    <text evidence="1">Homodimer.</text>
</comment>
<comment type="subcellular location">
    <subcellularLocation>
        <location evidence="1">Secreted</location>
        <location evidence="1">Extracellular space</location>
        <location evidence="1">Apoplast</location>
    </subcellularLocation>
</comment>
<comment type="similarity">
    <text evidence="3">Belongs to the plant dirigent protein family.</text>
</comment>
<comment type="sequence caution" evidence="3">
    <conflict type="erroneous initiation">
        <sequence resource="EMBL-CDS" id="AAB72169"/>
    </conflict>
    <text>Truncated N-terminus.</text>
</comment>
<accession>Q67YM6</accession>
<accession>O23132</accession>
<gene>
    <name type="primary">DIR11</name>
    <name type="ordered locus">At1g22900</name>
    <name type="ORF">F19G10.14</name>
</gene>
<keyword id="KW-0052">Apoplast</keyword>
<keyword id="KW-0325">Glycoprotein</keyword>
<keyword id="KW-1185">Reference proteome</keyword>
<keyword id="KW-0964">Secreted</keyword>
<keyword id="KW-0732">Signal</keyword>
<feature type="signal peptide" evidence="2">
    <location>
        <begin position="1"/>
        <end position="33"/>
    </location>
</feature>
<feature type="chain" id="PRO_0000422842" description="Dirigent protein 11">
    <location>
        <begin position="34"/>
        <end position="193"/>
    </location>
</feature>
<feature type="glycosylation site" description="N-linked (GlcNAc...) asparagine" evidence="2">
    <location>
        <position position="78"/>
    </location>
</feature>
<feature type="glycosylation site" description="N-linked (GlcNAc...) asparagine" evidence="2">
    <location>
        <position position="136"/>
    </location>
</feature>
<proteinExistence type="evidence at transcript level"/>
<dbReference type="EMBL" id="AF000657">
    <property type="protein sequence ID" value="AAB72169.1"/>
    <property type="status" value="ALT_INIT"/>
    <property type="molecule type" value="Genomic_DNA"/>
</dbReference>
<dbReference type="EMBL" id="CP002684">
    <property type="protein sequence ID" value="AEE30305.1"/>
    <property type="molecule type" value="Genomic_DNA"/>
</dbReference>
<dbReference type="EMBL" id="BT010483">
    <property type="protein sequence ID" value="AAQ65106.1"/>
    <property type="molecule type" value="mRNA"/>
</dbReference>
<dbReference type="EMBL" id="AK176442">
    <property type="protein sequence ID" value="BAD44205.1"/>
    <property type="molecule type" value="mRNA"/>
</dbReference>
<dbReference type="PIR" id="A86363">
    <property type="entry name" value="A86363"/>
</dbReference>
<dbReference type="RefSeq" id="NP_173703.2">
    <property type="nucleotide sequence ID" value="NM_102137.3"/>
</dbReference>
<dbReference type="SMR" id="Q67YM6"/>
<dbReference type="STRING" id="3702.Q67YM6"/>
<dbReference type="GlyCosmos" id="Q67YM6">
    <property type="glycosylation" value="2 sites, No reported glycans"/>
</dbReference>
<dbReference type="GlyGen" id="Q67YM6">
    <property type="glycosylation" value="2 sites"/>
</dbReference>
<dbReference type="PaxDb" id="3702-AT1G22900.1"/>
<dbReference type="EnsemblPlants" id="AT1G22900.1">
    <property type="protein sequence ID" value="AT1G22900.1"/>
    <property type="gene ID" value="AT1G22900"/>
</dbReference>
<dbReference type="GeneID" id="838897"/>
<dbReference type="Gramene" id="AT1G22900.1">
    <property type="protein sequence ID" value="AT1G22900.1"/>
    <property type="gene ID" value="AT1G22900"/>
</dbReference>
<dbReference type="KEGG" id="ath:AT1G22900"/>
<dbReference type="Araport" id="AT1G22900"/>
<dbReference type="TAIR" id="AT1G22900"/>
<dbReference type="eggNOG" id="ENOG502RXST">
    <property type="taxonomic scope" value="Eukaryota"/>
</dbReference>
<dbReference type="HOGENOM" id="CLU_087111_2_1_1"/>
<dbReference type="InParanoid" id="Q67YM6"/>
<dbReference type="OMA" id="FIAEPNG"/>
<dbReference type="PhylomeDB" id="Q67YM6"/>
<dbReference type="PRO" id="PR:Q67YM6"/>
<dbReference type="Proteomes" id="UP000006548">
    <property type="component" value="Chromosome 1"/>
</dbReference>
<dbReference type="ExpressionAtlas" id="Q67YM6">
    <property type="expression patterns" value="baseline and differential"/>
</dbReference>
<dbReference type="GO" id="GO:0048046">
    <property type="term" value="C:apoplast"/>
    <property type="evidence" value="ECO:0007669"/>
    <property type="project" value="UniProtKB-SubCell"/>
</dbReference>
<dbReference type="GO" id="GO:0009699">
    <property type="term" value="P:phenylpropanoid biosynthetic process"/>
    <property type="evidence" value="ECO:0007669"/>
    <property type="project" value="UniProtKB-ARBA"/>
</dbReference>
<dbReference type="Gene3D" id="2.40.480.10">
    <property type="entry name" value="Allene oxide cyclase-like"/>
    <property type="match status" value="1"/>
</dbReference>
<dbReference type="InterPro" id="IPR044859">
    <property type="entry name" value="Allene_oxi_cyc_Dirigent"/>
</dbReference>
<dbReference type="InterPro" id="IPR004265">
    <property type="entry name" value="Dirigent"/>
</dbReference>
<dbReference type="PANTHER" id="PTHR21495">
    <property type="entry name" value="NUCLEOPORIN-RELATED"/>
    <property type="match status" value="1"/>
</dbReference>
<dbReference type="Pfam" id="PF03018">
    <property type="entry name" value="Dirigent"/>
    <property type="match status" value="1"/>
</dbReference>
<organism>
    <name type="scientific">Arabidopsis thaliana</name>
    <name type="common">Mouse-ear cress</name>
    <dbReference type="NCBI Taxonomy" id="3702"/>
    <lineage>
        <taxon>Eukaryota</taxon>
        <taxon>Viridiplantae</taxon>
        <taxon>Streptophyta</taxon>
        <taxon>Embryophyta</taxon>
        <taxon>Tracheophyta</taxon>
        <taxon>Spermatophyta</taxon>
        <taxon>Magnoliopsida</taxon>
        <taxon>eudicotyledons</taxon>
        <taxon>Gunneridae</taxon>
        <taxon>Pentapetalae</taxon>
        <taxon>rosids</taxon>
        <taxon>malvids</taxon>
        <taxon>Brassicales</taxon>
        <taxon>Brassicaceae</taxon>
        <taxon>Camelineae</taxon>
        <taxon>Arabidopsis</taxon>
    </lineage>
</organism>
<protein>
    <recommendedName>
        <fullName>Dirigent protein 11</fullName>
        <shortName>AtDIR11</shortName>
    </recommendedName>
</protein>
<reference key="1">
    <citation type="journal article" date="2000" name="Nature">
        <title>Sequence and analysis of chromosome 1 of the plant Arabidopsis thaliana.</title>
        <authorList>
            <person name="Theologis A."/>
            <person name="Ecker J.R."/>
            <person name="Palm C.J."/>
            <person name="Federspiel N.A."/>
            <person name="Kaul S."/>
            <person name="White O."/>
            <person name="Alonso J."/>
            <person name="Altafi H."/>
            <person name="Araujo R."/>
            <person name="Bowman C.L."/>
            <person name="Brooks S.Y."/>
            <person name="Buehler E."/>
            <person name="Chan A."/>
            <person name="Chao Q."/>
            <person name="Chen H."/>
            <person name="Cheuk R.F."/>
            <person name="Chin C.W."/>
            <person name="Chung M.K."/>
            <person name="Conn L."/>
            <person name="Conway A.B."/>
            <person name="Conway A.R."/>
            <person name="Creasy T.H."/>
            <person name="Dewar K."/>
            <person name="Dunn P."/>
            <person name="Etgu P."/>
            <person name="Feldblyum T.V."/>
            <person name="Feng J.-D."/>
            <person name="Fong B."/>
            <person name="Fujii C.Y."/>
            <person name="Gill J.E."/>
            <person name="Goldsmith A.D."/>
            <person name="Haas B."/>
            <person name="Hansen N.F."/>
            <person name="Hughes B."/>
            <person name="Huizar L."/>
            <person name="Hunter J.L."/>
            <person name="Jenkins J."/>
            <person name="Johnson-Hopson C."/>
            <person name="Khan S."/>
            <person name="Khaykin E."/>
            <person name="Kim C.J."/>
            <person name="Koo H.L."/>
            <person name="Kremenetskaia I."/>
            <person name="Kurtz D.B."/>
            <person name="Kwan A."/>
            <person name="Lam B."/>
            <person name="Langin-Hooper S."/>
            <person name="Lee A."/>
            <person name="Lee J.M."/>
            <person name="Lenz C.A."/>
            <person name="Li J.H."/>
            <person name="Li Y.-P."/>
            <person name="Lin X."/>
            <person name="Liu S.X."/>
            <person name="Liu Z.A."/>
            <person name="Luros J.S."/>
            <person name="Maiti R."/>
            <person name="Marziali A."/>
            <person name="Militscher J."/>
            <person name="Miranda M."/>
            <person name="Nguyen M."/>
            <person name="Nierman W.C."/>
            <person name="Osborne B.I."/>
            <person name="Pai G."/>
            <person name="Peterson J."/>
            <person name="Pham P.K."/>
            <person name="Rizzo M."/>
            <person name="Rooney T."/>
            <person name="Rowley D."/>
            <person name="Sakano H."/>
            <person name="Salzberg S.L."/>
            <person name="Schwartz J.R."/>
            <person name="Shinn P."/>
            <person name="Southwick A.M."/>
            <person name="Sun H."/>
            <person name="Tallon L.J."/>
            <person name="Tambunga G."/>
            <person name="Toriumi M.J."/>
            <person name="Town C.D."/>
            <person name="Utterback T."/>
            <person name="Van Aken S."/>
            <person name="Vaysberg M."/>
            <person name="Vysotskaia V.S."/>
            <person name="Walker M."/>
            <person name="Wu D."/>
            <person name="Yu G."/>
            <person name="Fraser C.M."/>
            <person name="Venter J.C."/>
            <person name="Davis R.W."/>
        </authorList>
    </citation>
    <scope>NUCLEOTIDE SEQUENCE [LARGE SCALE GENOMIC DNA]</scope>
    <source>
        <strain>cv. Columbia</strain>
    </source>
</reference>
<reference key="2">
    <citation type="journal article" date="2017" name="Plant J.">
        <title>Araport11: a complete reannotation of the Arabidopsis thaliana reference genome.</title>
        <authorList>
            <person name="Cheng C.Y."/>
            <person name="Krishnakumar V."/>
            <person name="Chan A.P."/>
            <person name="Thibaud-Nissen F."/>
            <person name="Schobel S."/>
            <person name="Town C.D."/>
        </authorList>
    </citation>
    <scope>GENOME REANNOTATION</scope>
    <source>
        <strain>cv. Columbia</strain>
    </source>
</reference>
<reference key="3">
    <citation type="journal article" date="2003" name="Science">
        <title>Empirical analysis of transcriptional activity in the Arabidopsis genome.</title>
        <authorList>
            <person name="Yamada K."/>
            <person name="Lim J."/>
            <person name="Dale J.M."/>
            <person name="Chen H."/>
            <person name="Shinn P."/>
            <person name="Palm C.J."/>
            <person name="Southwick A.M."/>
            <person name="Wu H.C."/>
            <person name="Kim C.J."/>
            <person name="Nguyen M."/>
            <person name="Pham P.K."/>
            <person name="Cheuk R.F."/>
            <person name="Karlin-Newmann G."/>
            <person name="Liu S.X."/>
            <person name="Lam B."/>
            <person name="Sakano H."/>
            <person name="Wu T."/>
            <person name="Yu G."/>
            <person name="Miranda M."/>
            <person name="Quach H.L."/>
            <person name="Tripp M."/>
            <person name="Chang C.H."/>
            <person name="Lee J.M."/>
            <person name="Toriumi M.J."/>
            <person name="Chan M.M."/>
            <person name="Tang C.C."/>
            <person name="Onodera C.S."/>
            <person name="Deng J.M."/>
            <person name="Akiyama K."/>
            <person name="Ansari Y."/>
            <person name="Arakawa T."/>
            <person name="Banh J."/>
            <person name="Banno F."/>
            <person name="Bowser L."/>
            <person name="Brooks S.Y."/>
            <person name="Carninci P."/>
            <person name="Chao Q."/>
            <person name="Choy N."/>
            <person name="Enju A."/>
            <person name="Goldsmith A.D."/>
            <person name="Gurjal M."/>
            <person name="Hansen N.F."/>
            <person name="Hayashizaki Y."/>
            <person name="Johnson-Hopson C."/>
            <person name="Hsuan V.W."/>
            <person name="Iida K."/>
            <person name="Karnes M."/>
            <person name="Khan S."/>
            <person name="Koesema E."/>
            <person name="Ishida J."/>
            <person name="Jiang P.X."/>
            <person name="Jones T."/>
            <person name="Kawai J."/>
            <person name="Kamiya A."/>
            <person name="Meyers C."/>
            <person name="Nakajima M."/>
            <person name="Narusaka M."/>
            <person name="Seki M."/>
            <person name="Sakurai T."/>
            <person name="Satou M."/>
            <person name="Tamse R."/>
            <person name="Vaysberg M."/>
            <person name="Wallender E.K."/>
            <person name="Wong C."/>
            <person name="Yamamura Y."/>
            <person name="Yuan S."/>
            <person name="Shinozaki K."/>
            <person name="Davis R.W."/>
            <person name="Theologis A."/>
            <person name="Ecker J.R."/>
        </authorList>
    </citation>
    <scope>NUCLEOTIDE SEQUENCE [LARGE SCALE MRNA] OF 7-193</scope>
    <source>
        <strain>cv. Columbia</strain>
    </source>
</reference>
<reference key="4">
    <citation type="submission" date="2004-09" db="EMBL/GenBank/DDBJ databases">
        <title>Large-scale analysis of RIKEN Arabidopsis full-length (RAFL) cDNAs.</title>
        <authorList>
            <person name="Totoki Y."/>
            <person name="Seki M."/>
            <person name="Ishida J."/>
            <person name="Nakajima M."/>
            <person name="Enju A."/>
            <person name="Kamiya A."/>
            <person name="Narusaka M."/>
            <person name="Shin-i T."/>
            <person name="Nakagawa M."/>
            <person name="Sakamoto N."/>
            <person name="Oishi K."/>
            <person name="Kohara Y."/>
            <person name="Kobayashi M."/>
            <person name="Toyoda A."/>
            <person name="Sakaki Y."/>
            <person name="Sakurai T."/>
            <person name="Iida K."/>
            <person name="Akiyama K."/>
            <person name="Satou M."/>
            <person name="Toyoda T."/>
            <person name="Konagaya A."/>
            <person name="Carninci P."/>
            <person name="Kawai J."/>
            <person name="Hayashizaki Y."/>
            <person name="Shinozaki K."/>
        </authorList>
    </citation>
    <scope>NUCLEOTIDE SEQUENCE [LARGE SCALE MRNA]</scope>
    <source>
        <strain>cv. Columbia</strain>
    </source>
</reference>
<reference key="5">
    <citation type="journal article" date="2007" name="Phytochemistry">
        <title>Dirigent proteins in conifer defense II: Extended gene discovery, phylogeny, and constitutive and stress-induced gene expression in spruce (Picea spp.).</title>
        <authorList>
            <person name="Ralph S.G."/>
            <person name="Jancsik S."/>
            <person name="Bohlmann J."/>
        </authorList>
    </citation>
    <scope>GENE FAMILY</scope>
    <scope>NOMENCLATURE</scope>
</reference>
<sequence>MLQITNMATPFLLLLLPLIFSTVLLLTITVTQSKPYSKTTPFQGNKPDKLTHLHFYFHDIISGDKPTTIRVAEAPGTNSSATVFGAVLIVDAPVTEGPELSSKEVGRAQGLYASTDMKTFGFTMVFNFVFTEGEFNGSTAALYGRNPILLEERELPIIGGTGDFRFARGYALPKTYKVVNIDAVVEYNVFIWH</sequence>